<sequence>MKIRMRKKWMALPLAAMMIAGCSHSETSNSASGSKDTIKIMAPLLSPESPSDKSPSLKALEKYTGKEIKVTWVPDSSYNDKFNIVMASGEMPHAIVIKDKSAGFIKSVKAGAFWELSPYLKDYKNLSQADEKILKNSSVNGEVYGIYRTRDLIRACMIIRTDWLKNVGLDMPETLDDFYEVLKAFKEKDPDGNGKDDTYGMVVPKWMGLGNGSPWDVLQIWFGAPNRYGVENGKLIPDFTTKEYMDALTFFKKLYDEGLINKDFAVMDSAKWNDPVVKGKAGVIVDTGSRASQIQSAMEEADESNKDIIDIVGSLEGPNGKRTFPTSGYSGMITIPKSSVKTEKELKEVLSFLDKMNDKEAQILTNNGVKGRNYELKDGVFTSLEKNNKSLLYEHEGLAQFSMSIPKSEYYIEDQKTKLFQHRKDIITEGEKIAVFNPAESLVSDVYTQKGAQLDNIILDARTQFIIGEIDEKGFDDAVELWKKSGGNELMKDLNKLYQSSK</sequence>
<evidence type="ECO:0000255" key="1">
    <source>
        <dbReference type="PROSITE-ProRule" id="PRU00303"/>
    </source>
</evidence>
<evidence type="ECO:0000305" key="2"/>
<evidence type="ECO:0000305" key="3">
    <source>
    </source>
</evidence>
<keyword id="KW-1003">Cell membrane</keyword>
<keyword id="KW-0449">Lipoprotein</keyword>
<keyword id="KW-0472">Membrane</keyword>
<keyword id="KW-0564">Palmitate</keyword>
<keyword id="KW-1185">Reference proteome</keyword>
<keyword id="KW-0732">Signal</keyword>
<feature type="signal peptide" evidence="1">
    <location>
        <begin position="1"/>
        <end position="21"/>
    </location>
</feature>
<feature type="chain" id="PRO_0000018179" description="Lipoprotein LipO">
    <location>
        <begin position="22"/>
        <end position="502"/>
    </location>
</feature>
<feature type="lipid moiety-binding region" description="N-palmitoyl cysteine" evidence="3">
    <location>
        <position position="22"/>
    </location>
</feature>
<feature type="lipid moiety-binding region" description="S-diacylglycerol cysteine" evidence="2">
    <location>
        <position position="22"/>
    </location>
</feature>
<protein>
    <recommendedName>
        <fullName>Lipoprotein LipO</fullName>
    </recommendedName>
    <alternativeName>
        <fullName>Lipoprotein LplA</fullName>
    </alternativeName>
</protein>
<dbReference type="EMBL" id="L03376">
    <property type="protein sequence ID" value="AAC36913.1"/>
    <property type="molecule type" value="Genomic_DNA"/>
</dbReference>
<dbReference type="EMBL" id="AL009126">
    <property type="protein sequence ID" value="CAB12529.1"/>
    <property type="molecule type" value="Genomic_DNA"/>
</dbReference>
<dbReference type="PIR" id="I39876">
    <property type="entry name" value="I39876"/>
</dbReference>
<dbReference type="RefSeq" id="NP_388591.1">
    <property type="nucleotide sequence ID" value="NC_000964.3"/>
</dbReference>
<dbReference type="RefSeq" id="WP_003244341.1">
    <property type="nucleotide sequence ID" value="NZ_OZ025638.1"/>
</dbReference>
<dbReference type="SMR" id="P37966"/>
<dbReference type="FunCoup" id="P37966">
    <property type="interactions" value="216"/>
</dbReference>
<dbReference type="STRING" id="224308.BSU07100"/>
<dbReference type="PaxDb" id="224308-BSU07100"/>
<dbReference type="EnsemblBacteria" id="CAB12529">
    <property type="protein sequence ID" value="CAB12529"/>
    <property type="gene ID" value="BSU_07100"/>
</dbReference>
<dbReference type="GeneID" id="936079"/>
<dbReference type="KEGG" id="bsu:BSU07100"/>
<dbReference type="PATRIC" id="fig|224308.179.peg.770"/>
<dbReference type="eggNOG" id="COG1653">
    <property type="taxonomic scope" value="Bacteria"/>
</dbReference>
<dbReference type="InParanoid" id="P37966"/>
<dbReference type="OrthoDB" id="9787283at2"/>
<dbReference type="PhylomeDB" id="P37966"/>
<dbReference type="Proteomes" id="UP000001570">
    <property type="component" value="Chromosome"/>
</dbReference>
<dbReference type="GO" id="GO:0005886">
    <property type="term" value="C:plasma membrane"/>
    <property type="evidence" value="ECO:0007669"/>
    <property type="project" value="UniProtKB-SubCell"/>
</dbReference>
<dbReference type="CDD" id="cd13580">
    <property type="entry name" value="PBP2_AlgQ_like_1"/>
    <property type="match status" value="1"/>
</dbReference>
<dbReference type="Gene3D" id="3.40.190.10">
    <property type="entry name" value="Periplasmic binding protein-like II"/>
    <property type="match status" value="2"/>
</dbReference>
<dbReference type="InterPro" id="IPR050490">
    <property type="entry name" value="Bact_solute-bd_prot1"/>
</dbReference>
<dbReference type="InterPro" id="IPR006059">
    <property type="entry name" value="SBP"/>
</dbReference>
<dbReference type="PANTHER" id="PTHR43649">
    <property type="entry name" value="ARABINOSE-BINDING PROTEIN-RELATED"/>
    <property type="match status" value="1"/>
</dbReference>
<dbReference type="PANTHER" id="PTHR43649:SF33">
    <property type="entry name" value="POLYGALACTURONAN_RHAMNOGALACTURONAN-BINDING PROTEIN YTCQ"/>
    <property type="match status" value="1"/>
</dbReference>
<dbReference type="Pfam" id="PF01547">
    <property type="entry name" value="SBP_bac_1"/>
    <property type="match status" value="1"/>
</dbReference>
<dbReference type="SUPFAM" id="SSF53850">
    <property type="entry name" value="Periplasmic binding protein-like II"/>
    <property type="match status" value="1"/>
</dbReference>
<dbReference type="PROSITE" id="PS51257">
    <property type="entry name" value="PROKAR_LIPOPROTEIN"/>
    <property type="match status" value="1"/>
</dbReference>
<gene>
    <name type="primary">lipO</name>
    <name type="synonym">lplA</name>
    <name type="ordered locus">BSU07100</name>
</gene>
<name>LIPO_BACSU</name>
<reference key="1">
    <citation type="journal article" date="1994" name="Microbiology">
        <title>The Bacillus subtilis lipoprotein LplA causes cell lysis when expressed in Escherichia coli.</title>
        <authorList>
            <person name="Gomez A."/>
            <person name="Ramon D."/>
            <person name="Sanz P."/>
        </authorList>
    </citation>
    <scope>NUCLEOTIDE SEQUENCE [GENOMIC DNA]</scope>
    <scope>PALMITOYLATION AT CYS-22</scope>
    <source>
        <strain>168 / Marburg / ATCC 6051 / DSM 10 / JCM 1465 / NBRC 13719 / NCIMB 3610 / NRRL NRS-744 / VKM B-501</strain>
    </source>
</reference>
<reference key="2">
    <citation type="journal article" date="1997" name="Nature">
        <title>The complete genome sequence of the Gram-positive bacterium Bacillus subtilis.</title>
        <authorList>
            <person name="Kunst F."/>
            <person name="Ogasawara N."/>
            <person name="Moszer I."/>
            <person name="Albertini A.M."/>
            <person name="Alloni G."/>
            <person name="Azevedo V."/>
            <person name="Bertero M.G."/>
            <person name="Bessieres P."/>
            <person name="Bolotin A."/>
            <person name="Borchert S."/>
            <person name="Borriss R."/>
            <person name="Boursier L."/>
            <person name="Brans A."/>
            <person name="Braun M."/>
            <person name="Brignell S.C."/>
            <person name="Bron S."/>
            <person name="Brouillet S."/>
            <person name="Bruschi C.V."/>
            <person name="Caldwell B."/>
            <person name="Capuano V."/>
            <person name="Carter N.M."/>
            <person name="Choi S.-K."/>
            <person name="Codani J.-J."/>
            <person name="Connerton I.F."/>
            <person name="Cummings N.J."/>
            <person name="Daniel R.A."/>
            <person name="Denizot F."/>
            <person name="Devine K.M."/>
            <person name="Duesterhoeft A."/>
            <person name="Ehrlich S.D."/>
            <person name="Emmerson P.T."/>
            <person name="Entian K.-D."/>
            <person name="Errington J."/>
            <person name="Fabret C."/>
            <person name="Ferrari E."/>
            <person name="Foulger D."/>
            <person name="Fritz C."/>
            <person name="Fujita M."/>
            <person name="Fujita Y."/>
            <person name="Fuma S."/>
            <person name="Galizzi A."/>
            <person name="Galleron N."/>
            <person name="Ghim S.-Y."/>
            <person name="Glaser P."/>
            <person name="Goffeau A."/>
            <person name="Golightly E.J."/>
            <person name="Grandi G."/>
            <person name="Guiseppi G."/>
            <person name="Guy B.J."/>
            <person name="Haga K."/>
            <person name="Haiech J."/>
            <person name="Harwood C.R."/>
            <person name="Henaut A."/>
            <person name="Hilbert H."/>
            <person name="Holsappel S."/>
            <person name="Hosono S."/>
            <person name="Hullo M.-F."/>
            <person name="Itaya M."/>
            <person name="Jones L.-M."/>
            <person name="Joris B."/>
            <person name="Karamata D."/>
            <person name="Kasahara Y."/>
            <person name="Klaerr-Blanchard M."/>
            <person name="Klein C."/>
            <person name="Kobayashi Y."/>
            <person name="Koetter P."/>
            <person name="Koningstein G."/>
            <person name="Krogh S."/>
            <person name="Kumano M."/>
            <person name="Kurita K."/>
            <person name="Lapidus A."/>
            <person name="Lardinois S."/>
            <person name="Lauber J."/>
            <person name="Lazarevic V."/>
            <person name="Lee S.-M."/>
            <person name="Levine A."/>
            <person name="Liu H."/>
            <person name="Masuda S."/>
            <person name="Mauel C."/>
            <person name="Medigue C."/>
            <person name="Medina N."/>
            <person name="Mellado R.P."/>
            <person name="Mizuno M."/>
            <person name="Moestl D."/>
            <person name="Nakai S."/>
            <person name="Noback M."/>
            <person name="Noone D."/>
            <person name="O'Reilly M."/>
            <person name="Ogawa K."/>
            <person name="Ogiwara A."/>
            <person name="Oudega B."/>
            <person name="Park S.-H."/>
            <person name="Parro V."/>
            <person name="Pohl T.M."/>
            <person name="Portetelle D."/>
            <person name="Porwollik S."/>
            <person name="Prescott A.M."/>
            <person name="Presecan E."/>
            <person name="Pujic P."/>
            <person name="Purnelle B."/>
            <person name="Rapoport G."/>
            <person name="Rey M."/>
            <person name="Reynolds S."/>
            <person name="Rieger M."/>
            <person name="Rivolta C."/>
            <person name="Rocha E."/>
            <person name="Roche B."/>
            <person name="Rose M."/>
            <person name="Sadaie Y."/>
            <person name="Sato T."/>
            <person name="Scanlan E."/>
            <person name="Schleich S."/>
            <person name="Schroeter R."/>
            <person name="Scoffone F."/>
            <person name="Sekiguchi J."/>
            <person name="Sekowska A."/>
            <person name="Seror S.J."/>
            <person name="Serror P."/>
            <person name="Shin B.-S."/>
            <person name="Soldo B."/>
            <person name="Sorokin A."/>
            <person name="Tacconi E."/>
            <person name="Takagi T."/>
            <person name="Takahashi H."/>
            <person name="Takemaru K."/>
            <person name="Takeuchi M."/>
            <person name="Tamakoshi A."/>
            <person name="Tanaka T."/>
            <person name="Terpstra P."/>
            <person name="Tognoni A."/>
            <person name="Tosato V."/>
            <person name="Uchiyama S."/>
            <person name="Vandenbol M."/>
            <person name="Vannier F."/>
            <person name="Vassarotti A."/>
            <person name="Viari A."/>
            <person name="Wambutt R."/>
            <person name="Wedler E."/>
            <person name="Wedler H."/>
            <person name="Weitzenegger T."/>
            <person name="Winters P."/>
            <person name="Wipat A."/>
            <person name="Yamamoto H."/>
            <person name="Yamane K."/>
            <person name="Yasumoto K."/>
            <person name="Yata K."/>
            <person name="Yoshida K."/>
            <person name="Yoshikawa H.-F."/>
            <person name="Zumstein E."/>
            <person name="Yoshikawa H."/>
            <person name="Danchin A."/>
        </authorList>
    </citation>
    <scope>NUCLEOTIDE SEQUENCE [LARGE SCALE GENOMIC DNA]</scope>
    <source>
        <strain>168</strain>
    </source>
</reference>
<proteinExistence type="evidence at protein level"/>
<comment type="subcellular location">
    <subcellularLocation>
        <location evidence="2">Cell membrane</location>
        <topology evidence="2">Lipid-anchor</topology>
    </subcellularLocation>
</comment>
<accession>P37966</accession>
<organism>
    <name type="scientific">Bacillus subtilis (strain 168)</name>
    <dbReference type="NCBI Taxonomy" id="224308"/>
    <lineage>
        <taxon>Bacteria</taxon>
        <taxon>Bacillati</taxon>
        <taxon>Bacillota</taxon>
        <taxon>Bacilli</taxon>
        <taxon>Bacillales</taxon>
        <taxon>Bacillaceae</taxon>
        <taxon>Bacillus</taxon>
    </lineage>
</organism>